<keyword id="KW-0002">3D-structure</keyword>
<keyword id="KW-1015">Disulfide bond</keyword>
<keyword id="KW-0328">Glycosyltransferase</keyword>
<keyword id="KW-0333">Golgi apparatus</keyword>
<keyword id="KW-0472">Membrane</keyword>
<keyword id="KW-0597">Phosphoprotein</keyword>
<keyword id="KW-1185">Reference proteome</keyword>
<keyword id="KW-0728">SH3 domain</keyword>
<keyword id="KW-0729">SH3-binding</keyword>
<keyword id="KW-0735">Signal-anchor</keyword>
<keyword id="KW-0808">Transferase</keyword>
<keyword id="KW-0812">Transmembrane</keyword>
<keyword id="KW-1133">Transmembrane helix</keyword>
<gene>
    <name type="primary">Fut8</name>
</gene>
<organism>
    <name type="scientific">Mus musculus</name>
    <name type="common">Mouse</name>
    <dbReference type="NCBI Taxonomy" id="10090"/>
    <lineage>
        <taxon>Eukaryota</taxon>
        <taxon>Metazoa</taxon>
        <taxon>Chordata</taxon>
        <taxon>Craniata</taxon>
        <taxon>Vertebrata</taxon>
        <taxon>Euteleostomi</taxon>
        <taxon>Mammalia</taxon>
        <taxon>Eutheria</taxon>
        <taxon>Euarchontoglires</taxon>
        <taxon>Glires</taxon>
        <taxon>Rodentia</taxon>
        <taxon>Myomorpha</taxon>
        <taxon>Muroidea</taxon>
        <taxon>Muridae</taxon>
        <taxon>Murinae</taxon>
        <taxon>Mus</taxon>
        <taxon>Mus</taxon>
    </lineage>
</organism>
<dbReference type="EC" id="2.4.1.68"/>
<dbReference type="EMBL" id="AB025198">
    <property type="protein sequence ID" value="BAA76392.1"/>
    <property type="molecule type" value="mRNA"/>
</dbReference>
<dbReference type="EMBL" id="AK048520">
    <property type="protein sequence ID" value="BAC33357.1"/>
    <property type="molecule type" value="mRNA"/>
</dbReference>
<dbReference type="EMBL" id="AK051811">
    <property type="protein sequence ID" value="BAC34777.1"/>
    <property type="molecule type" value="mRNA"/>
</dbReference>
<dbReference type="EMBL" id="CH466526">
    <property type="protein sequence ID" value="EDL36441.1"/>
    <property type="molecule type" value="Genomic_DNA"/>
</dbReference>
<dbReference type="EMBL" id="CH466526">
    <property type="protein sequence ID" value="EDL36443.1"/>
    <property type="molecule type" value="Genomic_DNA"/>
</dbReference>
<dbReference type="EMBL" id="BC010666">
    <property type="protein sequence ID" value="AAH10666.1"/>
    <property type="molecule type" value="mRNA"/>
</dbReference>
<dbReference type="CCDS" id="CCDS25999.1"/>
<dbReference type="RefSeq" id="NP_001239543.1">
    <property type="nucleotide sequence ID" value="NM_001252614.1"/>
</dbReference>
<dbReference type="RefSeq" id="NP_001239544.1">
    <property type="nucleotide sequence ID" value="NM_001252615.1"/>
</dbReference>
<dbReference type="RefSeq" id="NP_001239545.1">
    <property type="nucleotide sequence ID" value="NM_001252616.1"/>
</dbReference>
<dbReference type="RefSeq" id="NP_058589.2">
    <property type="nucleotide sequence ID" value="NM_016893.5"/>
</dbReference>
<dbReference type="RefSeq" id="XP_011242446.1">
    <property type="nucleotide sequence ID" value="XM_011244144.2"/>
</dbReference>
<dbReference type="RefSeq" id="XP_011242447.1">
    <property type="nucleotide sequence ID" value="XM_011244145.2"/>
</dbReference>
<dbReference type="PDB" id="6VLF">
    <property type="method" value="X-ray"/>
    <property type="resolution" value="1.80 A"/>
    <property type="chains" value="A/B=68-575"/>
</dbReference>
<dbReference type="PDB" id="6VLG">
    <property type="method" value="X-ray"/>
    <property type="resolution" value="2.50 A"/>
    <property type="chains" value="A/B/C/D=68-575"/>
</dbReference>
<dbReference type="PDBsum" id="6VLF"/>
<dbReference type="PDBsum" id="6VLG"/>
<dbReference type="SMR" id="Q9WTS2"/>
<dbReference type="BioGRID" id="207335">
    <property type="interactions" value="4"/>
</dbReference>
<dbReference type="FunCoup" id="Q9WTS2">
    <property type="interactions" value="1067"/>
</dbReference>
<dbReference type="STRING" id="10090.ENSMUSP00000054530"/>
<dbReference type="CAZy" id="GT23">
    <property type="family name" value="Glycosyltransferase Family 23"/>
</dbReference>
<dbReference type="iPTMnet" id="Q9WTS2"/>
<dbReference type="PhosphoSitePlus" id="Q9WTS2"/>
<dbReference type="jPOST" id="Q9WTS2"/>
<dbReference type="PaxDb" id="10090-ENSMUSP00000054530"/>
<dbReference type="PeptideAtlas" id="Q9WTS2"/>
<dbReference type="ProteomicsDB" id="271813"/>
<dbReference type="Pumba" id="Q9WTS2"/>
<dbReference type="Antibodypedia" id="24748">
    <property type="antibodies" value="244 antibodies from 28 providers"/>
</dbReference>
<dbReference type="DNASU" id="53618"/>
<dbReference type="Ensembl" id="ENSMUST00000062804.8">
    <property type="protein sequence ID" value="ENSMUSP00000054530.8"/>
    <property type="gene ID" value="ENSMUSG00000021065.17"/>
</dbReference>
<dbReference type="Ensembl" id="ENSMUST00000171770.10">
    <property type="protein sequence ID" value="ENSMUSP00000130845.3"/>
    <property type="gene ID" value="ENSMUSG00000021065.17"/>
</dbReference>
<dbReference type="Ensembl" id="ENSMUST00000177595.9">
    <property type="protein sequence ID" value="ENSMUSP00000136327.2"/>
    <property type="gene ID" value="ENSMUSG00000021065.17"/>
</dbReference>
<dbReference type="GeneID" id="53618"/>
<dbReference type="KEGG" id="mmu:53618"/>
<dbReference type="UCSC" id="uc007nyy.2">
    <property type="organism name" value="mouse"/>
</dbReference>
<dbReference type="AGR" id="MGI:1858901"/>
<dbReference type="CTD" id="2530"/>
<dbReference type="MGI" id="MGI:1858901">
    <property type="gene designation" value="Fut8"/>
</dbReference>
<dbReference type="VEuPathDB" id="HostDB:ENSMUSG00000021065"/>
<dbReference type="eggNOG" id="KOG3705">
    <property type="taxonomic scope" value="Eukaryota"/>
</dbReference>
<dbReference type="GeneTree" id="ENSGT00530000063737"/>
<dbReference type="HOGENOM" id="CLU_021940_1_0_1"/>
<dbReference type="InParanoid" id="Q9WTS2"/>
<dbReference type="OMA" id="SDGYEAW"/>
<dbReference type="OrthoDB" id="2014825at2759"/>
<dbReference type="PhylomeDB" id="Q9WTS2"/>
<dbReference type="TreeFam" id="TF106108"/>
<dbReference type="BRENDA" id="2.4.1.68">
    <property type="organism ID" value="3474"/>
</dbReference>
<dbReference type="Reactome" id="R-MMU-975578">
    <property type="pathway name" value="Reactions specific to the complex N-glycan synthesis pathway"/>
</dbReference>
<dbReference type="UniPathway" id="UPA00378"/>
<dbReference type="BioGRID-ORCS" id="53618">
    <property type="hits" value="4 hits in 77 CRISPR screens"/>
</dbReference>
<dbReference type="CD-CODE" id="CE726F99">
    <property type="entry name" value="Postsynaptic density"/>
</dbReference>
<dbReference type="ChiTaRS" id="Fut8">
    <property type="organism name" value="mouse"/>
</dbReference>
<dbReference type="PRO" id="PR:Q9WTS2"/>
<dbReference type="Proteomes" id="UP000000589">
    <property type="component" value="Chromosome 12"/>
</dbReference>
<dbReference type="RNAct" id="Q9WTS2">
    <property type="molecule type" value="protein"/>
</dbReference>
<dbReference type="Bgee" id="ENSMUSG00000021065">
    <property type="expression patterns" value="Expressed in seminal vesicle and 260 other cell types or tissues"/>
</dbReference>
<dbReference type="GO" id="GO:0032580">
    <property type="term" value="C:Golgi cisterna membrane"/>
    <property type="evidence" value="ECO:0007669"/>
    <property type="project" value="UniProtKB-SubCell"/>
</dbReference>
<dbReference type="GO" id="GO:0046921">
    <property type="term" value="F:alpha-(1-&gt;6)-fucosyltransferase activity"/>
    <property type="evidence" value="ECO:0000315"/>
    <property type="project" value="MGI"/>
</dbReference>
<dbReference type="GO" id="GO:0008424">
    <property type="term" value="F:glycoprotein 6-alpha-L-fucosyltransferase activity"/>
    <property type="evidence" value="ECO:0000250"/>
    <property type="project" value="UniProtKB"/>
</dbReference>
<dbReference type="GO" id="GO:0016757">
    <property type="term" value="F:glycosyltransferase activity"/>
    <property type="evidence" value="ECO:0000247"/>
    <property type="project" value="MGI"/>
</dbReference>
<dbReference type="GO" id="GO:0017124">
    <property type="term" value="F:SH3 domain binding"/>
    <property type="evidence" value="ECO:0007669"/>
    <property type="project" value="UniProtKB-KW"/>
</dbReference>
<dbReference type="GO" id="GO:0016477">
    <property type="term" value="P:cell migration"/>
    <property type="evidence" value="ECO:0000315"/>
    <property type="project" value="MGI"/>
</dbReference>
<dbReference type="GO" id="GO:0010761">
    <property type="term" value="P:fibroblast migration"/>
    <property type="evidence" value="ECO:0000315"/>
    <property type="project" value="MGI"/>
</dbReference>
<dbReference type="GO" id="GO:0046368">
    <property type="term" value="P:GDP-L-fucose metabolic process"/>
    <property type="evidence" value="ECO:0000250"/>
    <property type="project" value="UniProtKB"/>
</dbReference>
<dbReference type="GO" id="GO:0007229">
    <property type="term" value="P:integrin-mediated signaling pathway"/>
    <property type="evidence" value="ECO:0000315"/>
    <property type="project" value="MGI"/>
</dbReference>
<dbReference type="GO" id="GO:0036071">
    <property type="term" value="P:N-glycan fucosylation"/>
    <property type="evidence" value="ECO:0000315"/>
    <property type="project" value="MGI"/>
</dbReference>
<dbReference type="GO" id="GO:0006491">
    <property type="term" value="P:N-glycan processing"/>
    <property type="evidence" value="ECO:0000315"/>
    <property type="project" value="MGI"/>
</dbReference>
<dbReference type="GO" id="GO:0018279">
    <property type="term" value="P:protein N-linked glycosylation via asparagine"/>
    <property type="evidence" value="ECO:0000250"/>
    <property type="project" value="UniProtKB"/>
</dbReference>
<dbReference type="GO" id="GO:0043112">
    <property type="term" value="P:receptor metabolic process"/>
    <property type="evidence" value="ECO:0000315"/>
    <property type="project" value="MGI"/>
</dbReference>
<dbReference type="GO" id="GO:1900407">
    <property type="term" value="P:regulation of cellular response to oxidative stress"/>
    <property type="evidence" value="ECO:0000315"/>
    <property type="project" value="MGI"/>
</dbReference>
<dbReference type="GO" id="GO:0010468">
    <property type="term" value="P:regulation of gene expression"/>
    <property type="evidence" value="ECO:0000315"/>
    <property type="project" value="MGI"/>
</dbReference>
<dbReference type="GO" id="GO:0007585">
    <property type="term" value="P:respiratory gaseous exchange by respiratory system"/>
    <property type="evidence" value="ECO:0000315"/>
    <property type="project" value="MGI"/>
</dbReference>
<dbReference type="GO" id="GO:0007179">
    <property type="term" value="P:transforming growth factor beta receptor signaling pathway"/>
    <property type="evidence" value="ECO:0000315"/>
    <property type="project" value="MGI"/>
</dbReference>
<dbReference type="CDD" id="cd11300">
    <property type="entry name" value="Fut8_like"/>
    <property type="match status" value="1"/>
</dbReference>
<dbReference type="CDD" id="cd11792">
    <property type="entry name" value="SH3_Fut8"/>
    <property type="match status" value="1"/>
</dbReference>
<dbReference type="FunFam" id="1.10.287.1060:FF:000003">
    <property type="entry name" value="Alpha-(1,6)-fucosyltransferase"/>
    <property type="match status" value="1"/>
</dbReference>
<dbReference type="FunFam" id="2.30.30.40:FF:000070">
    <property type="entry name" value="Alpha-(1,6)-fucosyltransferase"/>
    <property type="match status" value="1"/>
</dbReference>
<dbReference type="FunFam" id="3.40.50.11350:FF:000001">
    <property type="entry name" value="Alpha-(1,6)-fucosyltransferase"/>
    <property type="match status" value="1"/>
</dbReference>
<dbReference type="Gene3D" id="3.40.50.11350">
    <property type="match status" value="1"/>
</dbReference>
<dbReference type="Gene3D" id="1.10.287.1060">
    <property type="entry name" value="ESAT-6-like"/>
    <property type="match status" value="1"/>
</dbReference>
<dbReference type="Gene3D" id="2.30.30.40">
    <property type="entry name" value="SH3 Domains"/>
    <property type="match status" value="1"/>
</dbReference>
<dbReference type="InterPro" id="IPR015827">
    <property type="entry name" value="Fut8"/>
</dbReference>
<dbReference type="InterPro" id="IPR045573">
    <property type="entry name" value="Fut8_N_cat"/>
</dbReference>
<dbReference type="InterPro" id="IPR035653">
    <property type="entry name" value="Fut8_SH3"/>
</dbReference>
<dbReference type="InterPro" id="IPR027350">
    <property type="entry name" value="GT23_dom"/>
</dbReference>
<dbReference type="InterPro" id="IPR036028">
    <property type="entry name" value="SH3-like_dom_sf"/>
</dbReference>
<dbReference type="InterPro" id="IPR001452">
    <property type="entry name" value="SH3_domain"/>
</dbReference>
<dbReference type="PANTHER" id="PTHR13132">
    <property type="entry name" value="ALPHA- 1,6 -FUCOSYLTRANSFERASE"/>
    <property type="match status" value="1"/>
</dbReference>
<dbReference type="PANTHER" id="PTHR13132:SF29">
    <property type="entry name" value="ALPHA-(1,6)-FUCOSYLTRANSFERASE"/>
    <property type="match status" value="1"/>
</dbReference>
<dbReference type="Pfam" id="PF19745">
    <property type="entry name" value="FUT8_N_cat"/>
    <property type="match status" value="1"/>
</dbReference>
<dbReference type="Pfam" id="PF14604">
    <property type="entry name" value="SH3_9"/>
    <property type="match status" value="1"/>
</dbReference>
<dbReference type="PIRSF" id="PIRSF000472">
    <property type="entry name" value="Alpha1_6FUT_euk"/>
    <property type="match status" value="1"/>
</dbReference>
<dbReference type="SMART" id="SM00326">
    <property type="entry name" value="SH3"/>
    <property type="match status" value="1"/>
</dbReference>
<dbReference type="SUPFAM" id="SSF50044">
    <property type="entry name" value="SH3-domain"/>
    <property type="match status" value="1"/>
</dbReference>
<dbReference type="PROSITE" id="PS51659">
    <property type="entry name" value="GT23"/>
    <property type="match status" value="1"/>
</dbReference>
<dbReference type="PROSITE" id="PS50002">
    <property type="entry name" value="SH3"/>
    <property type="match status" value="1"/>
</dbReference>
<protein>
    <recommendedName>
        <fullName>Alpha-(1,6)-fucosyltransferase</fullName>
        <shortName>Alpha1-6FucT</shortName>
        <ecNumber>2.4.1.68</ecNumber>
    </recommendedName>
    <alternativeName>
        <fullName>Fucosyltransferase 8</fullName>
    </alternativeName>
    <alternativeName>
        <fullName>GDP-L-Fuc:N-acetyl-beta-D-glucosaminide alpha1,6-fucosyltransferase</fullName>
    </alternativeName>
    <alternativeName>
        <fullName>GDP-fucose--glycoprotein fucosyltransferase</fullName>
    </alternativeName>
    <alternativeName>
        <fullName>Glycoprotein 6-alpha-L-fucosyltransferase</fullName>
    </alternativeName>
</protein>
<comment type="function">
    <text evidence="1">Catalyzes the addition of fucose in alpha 1-6 linkage to the first GlcNAc residue, next to the peptide chains in N-glycans.</text>
</comment>
<comment type="catalytic activity">
    <reaction>
        <text>N(4)-{beta-D-GlcNAc-(1-&gt;2)-alpha-D-Man-(1-&gt;3)-[beta-D-GlcNAc-(1-&gt;2)-alpha-D-Man-(1-&gt;6)]-beta-D-Man-(1-&gt;4)-beta-D-GlcNAc-(1-&gt;4)-beta-D-GlcNAc}-L-asparaginyl-[protein] + GDP-beta-L-fucose = an N(4)-{beta-D-GlcNAc-(1-&gt;2)-alpha-D-Man-(1-&gt;3)-[beta-D-GlcNAc-(1-&gt;2)-alpha-D-Man-(1-&gt;6)]-beta-D-Man-(1-&gt;4)-beta-D-GlcNAc-(1-&gt;4)-[alpha-L-Fuc-(1-&gt;6)]-beta-D-GlcNAc}-L-asparaginyl-[protein] + GDP + H(+)</text>
        <dbReference type="Rhea" id="RHEA:12985"/>
        <dbReference type="Rhea" id="RHEA-COMP:13526"/>
        <dbReference type="Rhea" id="RHEA-COMP:13532"/>
        <dbReference type="ChEBI" id="CHEBI:15378"/>
        <dbReference type="ChEBI" id="CHEBI:57273"/>
        <dbReference type="ChEBI" id="CHEBI:58189"/>
        <dbReference type="ChEBI" id="CHEBI:60651"/>
        <dbReference type="ChEBI" id="CHEBI:137207"/>
        <dbReference type="EC" id="2.4.1.68"/>
    </reaction>
</comment>
<comment type="pathway">
    <text>Protein modification; protein glycosylation.</text>
</comment>
<comment type="subcellular location">
    <subcellularLocation>
        <location evidence="1">Golgi apparatus</location>
        <location evidence="1">Golgi stack membrane</location>
        <topology evidence="1">Single-pass type II membrane protein</topology>
    </subcellularLocation>
    <text evidence="1">Membrane-bound form in trans cisternae of Golgi.</text>
</comment>
<comment type="PTM">
    <text evidence="2">Tyrosine phosphorylated by PKDCC/VLK.</text>
</comment>
<comment type="similarity">
    <text evidence="5">Belongs to the glycosyltransferase 23 family.</text>
</comment>
<comment type="online information" name="Functional Glycomics Gateway - GTase">
    <link uri="http://www.functionalglycomics.org/glycomics/molecule/jsp/glycoEnzyme/viewGlycoEnzyme.jsp?gbpId=gt_mou_615"/>
    <text>Fucosyltransferase 8</text>
</comment>
<proteinExistence type="evidence at protein level"/>
<accession>Q9WTS2</accession>
<accession>Q543F5</accession>
<accession>Q921U1</accession>
<reference key="1">
    <citation type="journal article" date="2000" name="DNA Seq.">
        <title>Molecular cloning of mouse alpha-1,6-fucosyltransferase and expression of its mRNA in the developing cerebrum.</title>
        <authorList>
            <person name="Hayashi H."/>
            <person name="Yoneda A."/>
            <person name="Asada M."/>
            <person name="Ikekita M."/>
            <person name="Imamura T."/>
        </authorList>
    </citation>
    <scope>NUCLEOTIDE SEQUENCE [MRNA]</scope>
    <source>
        <tissue>Brain</tissue>
    </source>
</reference>
<reference key="2">
    <citation type="journal article" date="2005" name="Science">
        <title>The transcriptional landscape of the mammalian genome.</title>
        <authorList>
            <person name="Carninci P."/>
            <person name="Kasukawa T."/>
            <person name="Katayama S."/>
            <person name="Gough J."/>
            <person name="Frith M.C."/>
            <person name="Maeda N."/>
            <person name="Oyama R."/>
            <person name="Ravasi T."/>
            <person name="Lenhard B."/>
            <person name="Wells C."/>
            <person name="Kodzius R."/>
            <person name="Shimokawa K."/>
            <person name="Bajic V.B."/>
            <person name="Brenner S.E."/>
            <person name="Batalov S."/>
            <person name="Forrest A.R."/>
            <person name="Zavolan M."/>
            <person name="Davis M.J."/>
            <person name="Wilming L.G."/>
            <person name="Aidinis V."/>
            <person name="Allen J.E."/>
            <person name="Ambesi-Impiombato A."/>
            <person name="Apweiler R."/>
            <person name="Aturaliya R.N."/>
            <person name="Bailey T.L."/>
            <person name="Bansal M."/>
            <person name="Baxter L."/>
            <person name="Beisel K.W."/>
            <person name="Bersano T."/>
            <person name="Bono H."/>
            <person name="Chalk A.M."/>
            <person name="Chiu K.P."/>
            <person name="Choudhary V."/>
            <person name="Christoffels A."/>
            <person name="Clutterbuck D.R."/>
            <person name="Crowe M.L."/>
            <person name="Dalla E."/>
            <person name="Dalrymple B.P."/>
            <person name="de Bono B."/>
            <person name="Della Gatta G."/>
            <person name="di Bernardo D."/>
            <person name="Down T."/>
            <person name="Engstrom P."/>
            <person name="Fagiolini M."/>
            <person name="Faulkner G."/>
            <person name="Fletcher C.F."/>
            <person name="Fukushima T."/>
            <person name="Furuno M."/>
            <person name="Futaki S."/>
            <person name="Gariboldi M."/>
            <person name="Georgii-Hemming P."/>
            <person name="Gingeras T.R."/>
            <person name="Gojobori T."/>
            <person name="Green R.E."/>
            <person name="Gustincich S."/>
            <person name="Harbers M."/>
            <person name="Hayashi Y."/>
            <person name="Hensch T.K."/>
            <person name="Hirokawa N."/>
            <person name="Hill D."/>
            <person name="Huminiecki L."/>
            <person name="Iacono M."/>
            <person name="Ikeo K."/>
            <person name="Iwama A."/>
            <person name="Ishikawa T."/>
            <person name="Jakt M."/>
            <person name="Kanapin A."/>
            <person name="Katoh M."/>
            <person name="Kawasawa Y."/>
            <person name="Kelso J."/>
            <person name="Kitamura H."/>
            <person name="Kitano H."/>
            <person name="Kollias G."/>
            <person name="Krishnan S.P."/>
            <person name="Kruger A."/>
            <person name="Kummerfeld S.K."/>
            <person name="Kurochkin I.V."/>
            <person name="Lareau L.F."/>
            <person name="Lazarevic D."/>
            <person name="Lipovich L."/>
            <person name="Liu J."/>
            <person name="Liuni S."/>
            <person name="McWilliam S."/>
            <person name="Madan Babu M."/>
            <person name="Madera M."/>
            <person name="Marchionni L."/>
            <person name="Matsuda H."/>
            <person name="Matsuzawa S."/>
            <person name="Miki H."/>
            <person name="Mignone F."/>
            <person name="Miyake S."/>
            <person name="Morris K."/>
            <person name="Mottagui-Tabar S."/>
            <person name="Mulder N."/>
            <person name="Nakano N."/>
            <person name="Nakauchi H."/>
            <person name="Ng P."/>
            <person name="Nilsson R."/>
            <person name="Nishiguchi S."/>
            <person name="Nishikawa S."/>
            <person name="Nori F."/>
            <person name="Ohara O."/>
            <person name="Okazaki Y."/>
            <person name="Orlando V."/>
            <person name="Pang K.C."/>
            <person name="Pavan W.J."/>
            <person name="Pavesi G."/>
            <person name="Pesole G."/>
            <person name="Petrovsky N."/>
            <person name="Piazza S."/>
            <person name="Reed J."/>
            <person name="Reid J.F."/>
            <person name="Ring B.Z."/>
            <person name="Ringwald M."/>
            <person name="Rost B."/>
            <person name="Ruan Y."/>
            <person name="Salzberg S.L."/>
            <person name="Sandelin A."/>
            <person name="Schneider C."/>
            <person name="Schoenbach C."/>
            <person name="Sekiguchi K."/>
            <person name="Semple C.A."/>
            <person name="Seno S."/>
            <person name="Sessa L."/>
            <person name="Sheng Y."/>
            <person name="Shibata Y."/>
            <person name="Shimada H."/>
            <person name="Shimada K."/>
            <person name="Silva D."/>
            <person name="Sinclair B."/>
            <person name="Sperling S."/>
            <person name="Stupka E."/>
            <person name="Sugiura K."/>
            <person name="Sultana R."/>
            <person name="Takenaka Y."/>
            <person name="Taki K."/>
            <person name="Tammoja K."/>
            <person name="Tan S.L."/>
            <person name="Tang S."/>
            <person name="Taylor M.S."/>
            <person name="Tegner J."/>
            <person name="Teichmann S.A."/>
            <person name="Ueda H.R."/>
            <person name="van Nimwegen E."/>
            <person name="Verardo R."/>
            <person name="Wei C.L."/>
            <person name="Yagi K."/>
            <person name="Yamanishi H."/>
            <person name="Zabarovsky E."/>
            <person name="Zhu S."/>
            <person name="Zimmer A."/>
            <person name="Hide W."/>
            <person name="Bult C."/>
            <person name="Grimmond S.M."/>
            <person name="Teasdale R.D."/>
            <person name="Liu E.T."/>
            <person name="Brusic V."/>
            <person name="Quackenbush J."/>
            <person name="Wahlestedt C."/>
            <person name="Mattick J.S."/>
            <person name="Hume D.A."/>
            <person name="Kai C."/>
            <person name="Sasaki D."/>
            <person name="Tomaru Y."/>
            <person name="Fukuda S."/>
            <person name="Kanamori-Katayama M."/>
            <person name="Suzuki M."/>
            <person name="Aoki J."/>
            <person name="Arakawa T."/>
            <person name="Iida J."/>
            <person name="Imamura K."/>
            <person name="Itoh M."/>
            <person name="Kato T."/>
            <person name="Kawaji H."/>
            <person name="Kawagashira N."/>
            <person name="Kawashima T."/>
            <person name="Kojima M."/>
            <person name="Kondo S."/>
            <person name="Konno H."/>
            <person name="Nakano K."/>
            <person name="Ninomiya N."/>
            <person name="Nishio T."/>
            <person name="Okada M."/>
            <person name="Plessy C."/>
            <person name="Shibata K."/>
            <person name="Shiraki T."/>
            <person name="Suzuki S."/>
            <person name="Tagami M."/>
            <person name="Waki K."/>
            <person name="Watahiki A."/>
            <person name="Okamura-Oho Y."/>
            <person name="Suzuki H."/>
            <person name="Kawai J."/>
            <person name="Hayashizaki Y."/>
        </authorList>
    </citation>
    <scope>NUCLEOTIDE SEQUENCE [LARGE SCALE MRNA]</scope>
    <source>
        <strain>C57BL/6J</strain>
        <tissue>Eye</tissue>
        <tissue>Head</tissue>
    </source>
</reference>
<reference key="3">
    <citation type="submission" date="2005-09" db="EMBL/GenBank/DDBJ databases">
        <authorList>
            <person name="Mural R.J."/>
            <person name="Adams M.D."/>
            <person name="Myers E.W."/>
            <person name="Smith H.O."/>
            <person name="Venter J.C."/>
        </authorList>
    </citation>
    <scope>NUCLEOTIDE SEQUENCE [LARGE SCALE GENOMIC DNA]</scope>
</reference>
<reference key="4">
    <citation type="journal article" date="2004" name="Genome Res.">
        <title>The status, quality, and expansion of the NIH full-length cDNA project: the Mammalian Gene Collection (MGC).</title>
        <authorList>
            <consortium name="The MGC Project Team"/>
        </authorList>
    </citation>
    <scope>NUCLEOTIDE SEQUENCE [LARGE SCALE MRNA]</scope>
</reference>
<reference key="5">
    <citation type="journal article" date="2010" name="Cell">
        <title>A tissue-specific atlas of mouse protein phosphorylation and expression.</title>
        <authorList>
            <person name="Huttlin E.L."/>
            <person name="Jedrychowski M.P."/>
            <person name="Elias J.E."/>
            <person name="Goswami T."/>
            <person name="Rad R."/>
            <person name="Beausoleil S.A."/>
            <person name="Villen J."/>
            <person name="Haas W."/>
            <person name="Sowa M.E."/>
            <person name="Gygi S.P."/>
        </authorList>
    </citation>
    <scope>PHOSPHORYLATION [LARGE SCALE ANALYSIS] AT SER-278</scope>
    <scope>IDENTIFICATION BY MASS SPECTROMETRY [LARGE SCALE ANALYSIS]</scope>
    <source>
        <tissue>Kidney</tissue>
        <tissue>Spleen</tissue>
        <tissue>Testis</tissue>
    </source>
</reference>
<feature type="chain" id="PRO_0000080527" description="Alpha-(1,6)-fucosyltransferase">
    <location>
        <begin position="1"/>
        <end position="575"/>
    </location>
</feature>
<feature type="topological domain" description="Cytoplasmic" evidence="3">
    <location>
        <begin position="1"/>
        <end position="9"/>
    </location>
</feature>
<feature type="transmembrane region" description="Helical; Signal-anchor for type II membrane protein" evidence="3">
    <location>
        <begin position="10"/>
        <end position="30"/>
    </location>
</feature>
<feature type="topological domain" description="Lumenal" evidence="3">
    <location>
        <begin position="31"/>
        <end position="575"/>
    </location>
</feature>
<feature type="domain" description="GT23" evidence="5">
    <location>
        <begin position="206"/>
        <end position="493"/>
    </location>
</feature>
<feature type="domain" description="SH3" evidence="4">
    <location>
        <begin position="502"/>
        <end position="563"/>
    </location>
</feature>
<feature type="region of interest" description="Important for donor substrate binding">
    <location>
        <begin position="365"/>
        <end position="366"/>
    </location>
</feature>
<feature type="short sequence motif" description="SH3-binding" evidence="3">
    <location>
        <begin position="299"/>
        <end position="305"/>
    </location>
</feature>
<feature type="modified residue" description="Phosphoserine" evidence="7">
    <location>
        <position position="278"/>
    </location>
</feature>
<feature type="disulfide bond" evidence="1">
    <location>
        <begin position="204"/>
        <end position="266"/>
    </location>
</feature>
<feature type="disulfide bond" evidence="1">
    <location>
        <begin position="212"/>
        <end position="230"/>
    </location>
</feature>
<feature type="disulfide bond" evidence="1">
    <location>
        <begin position="218"/>
        <end position="222"/>
    </location>
</feature>
<feature type="disulfide bond" evidence="1">
    <location>
        <begin position="465"/>
        <end position="472"/>
    </location>
</feature>
<feature type="sequence conflict" description="In Ref. 1; BAA76392." evidence="6" ref="1">
    <original>S</original>
    <variation>T</variation>
    <location>
        <position position="40"/>
    </location>
</feature>
<feature type="sequence conflict" description="In Ref. 1; BAA76392." evidence="6" ref="1">
    <original>E</original>
    <variation>Q</variation>
    <location>
        <position position="388"/>
    </location>
</feature>
<feature type="sequence conflict" description="In Ref. 1; BAA76392." evidence="6" ref="1">
    <original>K</original>
    <variation>N</variation>
    <location>
        <position position="418"/>
    </location>
</feature>
<feature type="helix" evidence="8">
    <location>
        <begin position="110"/>
        <end position="137"/>
    </location>
</feature>
<feature type="helix" evidence="8">
    <location>
        <begin position="142"/>
        <end position="172"/>
    </location>
</feature>
<feature type="helix" evidence="8">
    <location>
        <begin position="173"/>
        <end position="175"/>
    </location>
</feature>
<feature type="helix" evidence="8">
    <location>
        <begin position="176"/>
        <end position="199"/>
    </location>
</feature>
<feature type="helix" evidence="8">
    <location>
        <begin position="204"/>
        <end position="206"/>
    </location>
</feature>
<feature type="strand" evidence="8">
    <location>
        <begin position="209"/>
        <end position="213"/>
    </location>
</feature>
<feature type="helix" evidence="8">
    <location>
        <begin position="220"/>
        <end position="237"/>
    </location>
</feature>
<feature type="strand" evidence="8">
    <location>
        <begin position="240"/>
        <end position="244"/>
    </location>
</feature>
<feature type="helix" evidence="8">
    <location>
        <begin position="255"/>
        <end position="257"/>
    </location>
</feature>
<feature type="strand" evidence="8">
    <location>
        <begin position="274"/>
        <end position="276"/>
    </location>
</feature>
<feature type="turn" evidence="8">
    <location>
        <begin position="281"/>
        <end position="284"/>
    </location>
</feature>
<feature type="strand" evidence="8">
    <location>
        <begin position="287"/>
        <end position="290"/>
    </location>
</feature>
<feature type="helix" evidence="8">
    <location>
        <begin position="294"/>
        <end position="296"/>
    </location>
</feature>
<feature type="helix" evidence="8">
    <location>
        <begin position="310"/>
        <end position="317"/>
    </location>
</feature>
<feature type="helix" evidence="8">
    <location>
        <begin position="323"/>
        <end position="335"/>
    </location>
</feature>
<feature type="helix" evidence="8">
    <location>
        <begin position="340"/>
        <end position="353"/>
    </location>
</feature>
<feature type="strand" evidence="8">
    <location>
        <begin position="357"/>
        <end position="364"/>
    </location>
</feature>
<feature type="helix" evidence="9">
    <location>
        <begin position="367"/>
        <end position="369"/>
    </location>
</feature>
<feature type="turn" evidence="9">
    <location>
        <begin position="371"/>
        <end position="373"/>
    </location>
</feature>
<feature type="helix" evidence="8">
    <location>
        <begin position="379"/>
        <end position="394"/>
    </location>
</feature>
<feature type="strand" evidence="8">
    <location>
        <begin position="400"/>
        <end position="409"/>
    </location>
</feature>
<feature type="helix" evidence="8">
    <location>
        <begin position="413"/>
        <end position="420"/>
    </location>
</feature>
<feature type="turn" evidence="9">
    <location>
        <begin position="421"/>
        <end position="423"/>
    </location>
</feature>
<feature type="strand" evidence="8">
    <location>
        <begin position="424"/>
        <end position="427"/>
    </location>
</feature>
<feature type="helix" evidence="8">
    <location>
        <begin position="429"/>
        <end position="431"/>
    </location>
</feature>
<feature type="turn" evidence="9">
    <location>
        <begin position="438"/>
        <end position="440"/>
    </location>
</feature>
<feature type="strand" evidence="9">
    <location>
        <begin position="441"/>
        <end position="443"/>
    </location>
</feature>
<feature type="helix" evidence="8">
    <location>
        <begin position="447"/>
        <end position="459"/>
    </location>
</feature>
<feature type="strand" evidence="8">
    <location>
        <begin position="460"/>
        <end position="465"/>
    </location>
</feature>
<feature type="helix" evidence="8">
    <location>
        <begin position="470"/>
        <end position="480"/>
    </location>
</feature>
<feature type="strand" evidence="8">
    <location>
        <begin position="482"/>
        <end position="484"/>
    </location>
</feature>
<feature type="strand" evidence="8">
    <location>
        <begin position="490"/>
        <end position="494"/>
    </location>
</feature>
<feature type="strand" evidence="8">
    <location>
        <begin position="506"/>
        <end position="509"/>
    </location>
</feature>
<feature type="strand" evidence="8">
    <location>
        <begin position="528"/>
        <end position="534"/>
    </location>
</feature>
<feature type="strand" evidence="8">
    <location>
        <begin position="536"/>
        <end position="544"/>
    </location>
</feature>
<feature type="turn" evidence="8">
    <location>
        <begin position="545"/>
        <end position="548"/>
    </location>
</feature>
<feature type="strand" evidence="8">
    <location>
        <begin position="549"/>
        <end position="554"/>
    </location>
</feature>
<feature type="helix" evidence="8">
    <location>
        <begin position="555"/>
        <end position="557"/>
    </location>
</feature>
<feature type="strand" evidence="8">
    <location>
        <begin position="558"/>
        <end position="560"/>
    </location>
</feature>
<feature type="helix" evidence="8">
    <location>
        <begin position="571"/>
        <end position="574"/>
    </location>
</feature>
<name>FUT8_MOUSE</name>
<sequence>MRAWTGSWRWIMLILFAWGTLLFYIGGHLVRDNDHPDHSSRELSKILAKLERLKQQNEDLRRMAESLRIPEGPIDQGTATGRVRVLEEQLVKAKEQIENYKKQARNGLGKDHEILRRRIENGAKELWFFLQSELKKLKHLEGNELQRHADEILLDLGHHERSIMTDLYYLSQTDGAGDWREKEAKDLTELVQRRITYLQNPKDCSKARKLVCNINKGCGYGCQLHHVVYCFMIAYGTQRTLILESQNWRYATGGWETVFRPVSETCTDRSGLSTGHWSGEVNDKNIQVVELPIVDSLHPRPPYLPLAVPEDLADRLLRVHGDPAVWWVSQFVKYLIRPQPWLEKEIEEATKKLGFKHPVIGVHVRRTDKVGTEAAFHPIEEYMVHVEEHFQLLARRMQVDKKRVYLATDDPTLLKEAKTKYSNYEFISDNSISWSAGLHNRYTENSLRGVILDIHFLSQADFLVCTFSSQVCRVAYEIMQTLHPDASANFHSLDDIYYFGGQNAHNQIAVYPHKPRTEEEIPMEPGDIIGVAGNHWDGYSKGINRKLGKTGLYPSYKVREKIETVKYPTYPEAEK</sequence>
<evidence type="ECO:0000250" key="1"/>
<evidence type="ECO:0000250" key="2">
    <source>
        <dbReference type="UniProtKB" id="Q9BYC5"/>
    </source>
</evidence>
<evidence type="ECO:0000255" key="3"/>
<evidence type="ECO:0000255" key="4">
    <source>
        <dbReference type="PROSITE-ProRule" id="PRU00192"/>
    </source>
</evidence>
<evidence type="ECO:0000255" key="5">
    <source>
        <dbReference type="PROSITE-ProRule" id="PRU00992"/>
    </source>
</evidence>
<evidence type="ECO:0000305" key="6"/>
<evidence type="ECO:0007744" key="7">
    <source>
    </source>
</evidence>
<evidence type="ECO:0007829" key="8">
    <source>
        <dbReference type="PDB" id="6VLF"/>
    </source>
</evidence>
<evidence type="ECO:0007829" key="9">
    <source>
        <dbReference type="PDB" id="6VLG"/>
    </source>
</evidence>